<name>TRMB_STRPF</name>
<evidence type="ECO:0000250" key="1"/>
<evidence type="ECO:0000255" key="2">
    <source>
        <dbReference type="HAMAP-Rule" id="MF_01057"/>
    </source>
</evidence>
<dbReference type="EC" id="2.1.1.33" evidence="2"/>
<dbReference type="EMBL" id="CP000262">
    <property type="protein sequence ID" value="ABF38477.1"/>
    <property type="molecule type" value="Genomic_DNA"/>
</dbReference>
<dbReference type="SMR" id="Q1J5A9"/>
<dbReference type="KEGG" id="spi:MGAS10750_Spy1527"/>
<dbReference type="HOGENOM" id="CLU_050910_2_1_9"/>
<dbReference type="UniPathway" id="UPA00989"/>
<dbReference type="Proteomes" id="UP000002434">
    <property type="component" value="Chromosome"/>
</dbReference>
<dbReference type="GO" id="GO:0043527">
    <property type="term" value="C:tRNA methyltransferase complex"/>
    <property type="evidence" value="ECO:0007669"/>
    <property type="project" value="TreeGrafter"/>
</dbReference>
<dbReference type="GO" id="GO:0008176">
    <property type="term" value="F:tRNA (guanine(46)-N7)-methyltransferase activity"/>
    <property type="evidence" value="ECO:0007669"/>
    <property type="project" value="UniProtKB-UniRule"/>
</dbReference>
<dbReference type="CDD" id="cd02440">
    <property type="entry name" value="AdoMet_MTases"/>
    <property type="match status" value="1"/>
</dbReference>
<dbReference type="FunFam" id="3.40.50.150:FF:000035">
    <property type="entry name" value="tRNA (guanine-N(7)-)-methyltransferase"/>
    <property type="match status" value="1"/>
</dbReference>
<dbReference type="Gene3D" id="3.40.50.150">
    <property type="entry name" value="Vaccinia Virus protein VP39"/>
    <property type="match status" value="1"/>
</dbReference>
<dbReference type="HAMAP" id="MF_01057">
    <property type="entry name" value="tRNA_methyltr_TrmB"/>
    <property type="match status" value="1"/>
</dbReference>
<dbReference type="InterPro" id="IPR029063">
    <property type="entry name" value="SAM-dependent_MTases_sf"/>
</dbReference>
<dbReference type="InterPro" id="IPR003358">
    <property type="entry name" value="tRNA_(Gua-N-7)_MeTrfase_Trmb"/>
</dbReference>
<dbReference type="InterPro" id="IPR055361">
    <property type="entry name" value="tRNA_methyltr_TrmB_bact"/>
</dbReference>
<dbReference type="NCBIfam" id="NF001080">
    <property type="entry name" value="PRK00121.2-2"/>
    <property type="match status" value="1"/>
</dbReference>
<dbReference type="NCBIfam" id="TIGR00091">
    <property type="entry name" value="tRNA (guanosine(46)-N7)-methyltransferase TrmB"/>
    <property type="match status" value="1"/>
</dbReference>
<dbReference type="PANTHER" id="PTHR23417">
    <property type="entry name" value="3-DEOXY-D-MANNO-OCTULOSONIC-ACID TRANSFERASE/TRNA GUANINE-N 7 - -METHYLTRANSFERASE"/>
    <property type="match status" value="1"/>
</dbReference>
<dbReference type="PANTHER" id="PTHR23417:SF14">
    <property type="entry name" value="PENTACOTRIPEPTIDE-REPEAT REGION OF PRORP DOMAIN-CONTAINING PROTEIN"/>
    <property type="match status" value="1"/>
</dbReference>
<dbReference type="Pfam" id="PF02390">
    <property type="entry name" value="Methyltransf_4"/>
    <property type="match status" value="1"/>
</dbReference>
<dbReference type="SUPFAM" id="SSF53335">
    <property type="entry name" value="S-adenosyl-L-methionine-dependent methyltransferases"/>
    <property type="match status" value="1"/>
</dbReference>
<dbReference type="PROSITE" id="PS51625">
    <property type="entry name" value="SAM_MT_TRMB"/>
    <property type="match status" value="1"/>
</dbReference>
<accession>Q1J5A9</accession>
<comment type="function">
    <text evidence="2">Catalyzes the formation of N(7)-methylguanine at position 46 (m7G46) in tRNA.</text>
</comment>
<comment type="catalytic activity">
    <reaction evidence="2">
        <text>guanosine(46) in tRNA + S-adenosyl-L-methionine = N(7)-methylguanosine(46) in tRNA + S-adenosyl-L-homocysteine</text>
        <dbReference type="Rhea" id="RHEA:42708"/>
        <dbReference type="Rhea" id="RHEA-COMP:10188"/>
        <dbReference type="Rhea" id="RHEA-COMP:10189"/>
        <dbReference type="ChEBI" id="CHEBI:57856"/>
        <dbReference type="ChEBI" id="CHEBI:59789"/>
        <dbReference type="ChEBI" id="CHEBI:74269"/>
        <dbReference type="ChEBI" id="CHEBI:74480"/>
        <dbReference type="EC" id="2.1.1.33"/>
    </reaction>
</comment>
<comment type="pathway">
    <text evidence="2">tRNA modification; N(7)-methylguanine-tRNA biosynthesis.</text>
</comment>
<comment type="similarity">
    <text evidence="2">Belongs to the class I-like SAM-binding methyltransferase superfamily. TrmB family.</text>
</comment>
<reference key="1">
    <citation type="journal article" date="2006" name="Proc. Natl. Acad. Sci. U.S.A.">
        <title>Molecular genetic anatomy of inter- and intraserotype variation in the human bacterial pathogen group A Streptococcus.</title>
        <authorList>
            <person name="Beres S.B."/>
            <person name="Richter E.W."/>
            <person name="Nagiec M.J."/>
            <person name="Sumby P."/>
            <person name="Porcella S.F."/>
            <person name="DeLeo F.R."/>
            <person name="Musser J.M."/>
        </authorList>
    </citation>
    <scope>NUCLEOTIDE SEQUENCE [LARGE SCALE GENOMIC DNA]</scope>
    <source>
        <strain>MGAS10750</strain>
    </source>
</reference>
<keyword id="KW-0489">Methyltransferase</keyword>
<keyword id="KW-0949">S-adenosyl-L-methionine</keyword>
<keyword id="KW-0808">Transferase</keyword>
<keyword id="KW-0819">tRNA processing</keyword>
<gene>
    <name evidence="2" type="primary">trmB</name>
    <name type="ordered locus">MGAS10750_Spy1527</name>
</gene>
<feature type="chain" id="PRO_0000288238" description="tRNA (guanine-N(7)-)-methyltransferase">
    <location>
        <begin position="1"/>
        <end position="211"/>
    </location>
</feature>
<feature type="region of interest" description="Interaction with RNA" evidence="2">
    <location>
        <begin position="124"/>
        <end position="129"/>
    </location>
</feature>
<feature type="active site" evidence="1">
    <location>
        <position position="118"/>
    </location>
</feature>
<feature type="binding site" evidence="2">
    <location>
        <position position="44"/>
    </location>
    <ligand>
        <name>S-adenosyl-L-methionine</name>
        <dbReference type="ChEBI" id="CHEBI:59789"/>
    </ligand>
</feature>
<feature type="binding site" evidence="2">
    <location>
        <position position="69"/>
    </location>
    <ligand>
        <name>S-adenosyl-L-methionine</name>
        <dbReference type="ChEBI" id="CHEBI:59789"/>
    </ligand>
</feature>
<feature type="binding site" evidence="2">
    <location>
        <position position="96"/>
    </location>
    <ligand>
        <name>S-adenosyl-L-methionine</name>
        <dbReference type="ChEBI" id="CHEBI:59789"/>
    </ligand>
</feature>
<feature type="binding site" evidence="2">
    <location>
        <position position="118"/>
    </location>
    <ligand>
        <name>S-adenosyl-L-methionine</name>
        <dbReference type="ChEBI" id="CHEBI:59789"/>
    </ligand>
</feature>
<feature type="binding site" evidence="2">
    <location>
        <position position="122"/>
    </location>
    <ligand>
        <name>substrate</name>
    </ligand>
</feature>
<feature type="binding site" evidence="2">
    <location>
        <position position="154"/>
    </location>
    <ligand>
        <name>substrate</name>
    </ligand>
</feature>
<feature type="binding site" evidence="2">
    <location>
        <begin position="191"/>
        <end position="194"/>
    </location>
    <ligand>
        <name>substrate</name>
    </ligand>
</feature>
<organism>
    <name type="scientific">Streptococcus pyogenes serotype M4 (strain MGAS10750)</name>
    <dbReference type="NCBI Taxonomy" id="370554"/>
    <lineage>
        <taxon>Bacteria</taxon>
        <taxon>Bacillati</taxon>
        <taxon>Bacillota</taxon>
        <taxon>Bacilli</taxon>
        <taxon>Lactobacillales</taxon>
        <taxon>Streptococcaceae</taxon>
        <taxon>Streptococcus</taxon>
    </lineage>
</organism>
<protein>
    <recommendedName>
        <fullName evidence="2">tRNA (guanine-N(7)-)-methyltransferase</fullName>
        <ecNumber evidence="2">2.1.1.33</ecNumber>
    </recommendedName>
    <alternativeName>
        <fullName evidence="2">tRNA (guanine(46)-N(7))-methyltransferase</fullName>
    </alternativeName>
    <alternativeName>
        <fullName evidence="2">tRNA(m7G46)-methyltransferase</fullName>
    </alternativeName>
</protein>
<proteinExistence type="inferred from homology"/>
<sequence>MRVRKRKGAEEHLANNPHYVILNPEDAKGRWHDVFGNDRPIHIEVGSGKGGFITGMALKNPDINYIGIDIQLSVLSYALDKVLASEVPNVKLLRVDGSSLTNYFEDGEVDMMYLNFSDPWPKTKHEKRRLTYKDFLDTYKRILPEHGEIHFKTDNRGLFEYSLASFSQYGMTLRQIWLDLHASNYEGNVMTEYEEKFSNKGQVIYRVEANF</sequence>